<keyword id="KW-0029">Amino-acid transport</keyword>
<keyword id="KW-1003">Cell membrane</keyword>
<keyword id="KW-0472">Membrane</keyword>
<keyword id="KW-1185">Reference proteome</keyword>
<keyword id="KW-0812">Transmembrane</keyword>
<keyword id="KW-1133">Transmembrane helix</keyword>
<keyword id="KW-0813">Transport</keyword>
<dbReference type="EMBL" id="X77636">
    <property type="protein sequence ID" value="CAA54725.1"/>
    <property type="molecule type" value="Genomic_DNA"/>
</dbReference>
<dbReference type="EMBL" id="D50453">
    <property type="protein sequence ID" value="BAA08993.1"/>
    <property type="molecule type" value="Genomic_DNA"/>
</dbReference>
<dbReference type="EMBL" id="AL009126">
    <property type="protein sequence ID" value="CAB12154.1"/>
    <property type="molecule type" value="Genomic_DNA"/>
</dbReference>
<dbReference type="PIR" id="I40451">
    <property type="entry name" value="I40451"/>
</dbReference>
<dbReference type="RefSeq" id="NP_388242.1">
    <property type="nucleotide sequence ID" value="NC_000964.3"/>
</dbReference>
<dbReference type="RefSeq" id="WP_003234541.1">
    <property type="nucleotide sequence ID" value="NZ_OZ025638.1"/>
</dbReference>
<dbReference type="SMR" id="P42200"/>
<dbReference type="FunCoup" id="P42200">
    <property type="interactions" value="177"/>
</dbReference>
<dbReference type="STRING" id="224308.BSU03600"/>
<dbReference type="TCDB" id="3.A.1.3.14">
    <property type="family name" value="the atp-binding cassette (abc) superfamily"/>
</dbReference>
<dbReference type="PaxDb" id="224308-BSU03600"/>
<dbReference type="EnsemblBacteria" id="CAB12154">
    <property type="protein sequence ID" value="CAB12154"/>
    <property type="gene ID" value="BSU_03600"/>
</dbReference>
<dbReference type="GeneID" id="938301"/>
<dbReference type="KEGG" id="bsu:BSU03600"/>
<dbReference type="PATRIC" id="fig|224308.179.peg.379"/>
<dbReference type="eggNOG" id="COG0765">
    <property type="taxonomic scope" value="Bacteria"/>
</dbReference>
<dbReference type="InParanoid" id="P42200"/>
<dbReference type="OrthoDB" id="9805999at2"/>
<dbReference type="PhylomeDB" id="P42200"/>
<dbReference type="BioCyc" id="BSUB:BSU03600-MONOMER"/>
<dbReference type="Proteomes" id="UP000001570">
    <property type="component" value="Chromosome"/>
</dbReference>
<dbReference type="GO" id="GO:0043190">
    <property type="term" value="C:ATP-binding cassette (ABC) transporter complex"/>
    <property type="evidence" value="ECO:0007669"/>
    <property type="project" value="InterPro"/>
</dbReference>
<dbReference type="GO" id="GO:0005886">
    <property type="term" value="C:plasma membrane"/>
    <property type="evidence" value="ECO:0000318"/>
    <property type="project" value="GO_Central"/>
</dbReference>
<dbReference type="GO" id="GO:0015184">
    <property type="term" value="F:L-cystine transmembrane transporter activity"/>
    <property type="evidence" value="ECO:0000318"/>
    <property type="project" value="GO_Central"/>
</dbReference>
<dbReference type="GO" id="GO:0015811">
    <property type="term" value="P:L-cystine transport"/>
    <property type="evidence" value="ECO:0000318"/>
    <property type="project" value="GO_Central"/>
</dbReference>
<dbReference type="CDD" id="cd06261">
    <property type="entry name" value="TM_PBP2"/>
    <property type="match status" value="1"/>
</dbReference>
<dbReference type="FunFam" id="1.10.3720.10:FF:000009">
    <property type="entry name" value="Amino acid ABC transporter permease"/>
    <property type="match status" value="1"/>
</dbReference>
<dbReference type="Gene3D" id="1.10.3720.10">
    <property type="entry name" value="MetI-like"/>
    <property type="match status" value="1"/>
</dbReference>
<dbReference type="InterPro" id="IPR010065">
    <property type="entry name" value="AA_ABC_transptr_permease_3TM"/>
</dbReference>
<dbReference type="InterPro" id="IPR043429">
    <property type="entry name" value="ArtM/GltK/GlnP/TcyL/YhdX-like"/>
</dbReference>
<dbReference type="InterPro" id="IPR000515">
    <property type="entry name" value="MetI-like"/>
</dbReference>
<dbReference type="InterPro" id="IPR035906">
    <property type="entry name" value="MetI-like_sf"/>
</dbReference>
<dbReference type="NCBIfam" id="TIGR01726">
    <property type="entry name" value="HEQRo_perm_3TM"/>
    <property type="match status" value="1"/>
</dbReference>
<dbReference type="PANTHER" id="PTHR30614:SF0">
    <property type="entry name" value="L-CYSTINE TRANSPORT SYSTEM PERMEASE PROTEIN TCYL"/>
    <property type="match status" value="1"/>
</dbReference>
<dbReference type="PANTHER" id="PTHR30614">
    <property type="entry name" value="MEMBRANE COMPONENT OF AMINO ACID ABC TRANSPORTER"/>
    <property type="match status" value="1"/>
</dbReference>
<dbReference type="Pfam" id="PF00528">
    <property type="entry name" value="BPD_transp_1"/>
    <property type="match status" value="1"/>
</dbReference>
<dbReference type="SUPFAM" id="SSF161098">
    <property type="entry name" value="MetI-like"/>
    <property type="match status" value="1"/>
</dbReference>
<dbReference type="PROSITE" id="PS50928">
    <property type="entry name" value="ABC_TM1"/>
    <property type="match status" value="1"/>
</dbReference>
<feature type="chain" id="PRO_0000060267" description="L-cystine transport system permease protein TcyB">
    <location>
        <begin position="1"/>
        <end position="234"/>
    </location>
</feature>
<feature type="transmembrane region" description="Helical" evidence="1">
    <location>
        <begin position="8"/>
        <end position="28"/>
    </location>
</feature>
<feature type="transmembrane region" description="Helical" evidence="1">
    <location>
        <begin position="36"/>
        <end position="56"/>
    </location>
</feature>
<feature type="transmembrane region" description="Helical" evidence="1">
    <location>
        <begin position="78"/>
        <end position="98"/>
    </location>
</feature>
<feature type="transmembrane region" description="Helical" evidence="1">
    <location>
        <begin position="100"/>
        <end position="120"/>
    </location>
</feature>
<feature type="transmembrane region" description="Helical" evidence="1">
    <location>
        <begin position="199"/>
        <end position="219"/>
    </location>
</feature>
<feature type="domain" description="ABC transmembrane type-1" evidence="1">
    <location>
        <begin position="32"/>
        <end position="221"/>
    </location>
</feature>
<name>TCYB_BACSU</name>
<sequence>MFLNNLPALTLGTAIPWDLVQQSFWPILSGGIYYTIPLTILSFIFGMILALITALARMSKVRPLRWVFSVYVSAIRGTPLLVQLFIIFYLFPAFNVTLDPFPSAVIAFSLNVGAYASEIIRASILSVPKGQWEAGYTIGMTHQKTLFRVILPQAFRVSIPPLSNTFISLIKDTSLASQILVAELFRKAQEIGARNLDQILVIYIEAAFIYWIICFLLSLVQHVIERRLDRYVAK</sequence>
<accession>P42200</accession>
<organism>
    <name type="scientific">Bacillus subtilis (strain 168)</name>
    <dbReference type="NCBI Taxonomy" id="224308"/>
    <lineage>
        <taxon>Bacteria</taxon>
        <taxon>Bacillati</taxon>
        <taxon>Bacillota</taxon>
        <taxon>Bacilli</taxon>
        <taxon>Bacillales</taxon>
        <taxon>Bacillaceae</taxon>
        <taxon>Bacillus</taxon>
    </lineage>
</organism>
<evidence type="ECO:0000255" key="1">
    <source>
        <dbReference type="PROSITE-ProRule" id="PRU00441"/>
    </source>
</evidence>
<evidence type="ECO:0000269" key="2">
    <source>
    </source>
</evidence>
<evidence type="ECO:0000305" key="3"/>
<evidence type="ECO:0000305" key="4">
    <source>
    </source>
</evidence>
<reference key="1">
    <citation type="journal article" date="1995" name="Microbiology">
        <title>An operon encoding a novel ABC-type transport system in Bacillus subtilis.</title>
        <authorList>
            <person name="Rodriguez F."/>
            <person name="Grandi G."/>
        </authorList>
    </citation>
    <scope>NUCLEOTIDE SEQUENCE [GENOMIC DNA]</scope>
    <source>
        <strain>168 / JH642</strain>
    </source>
</reference>
<reference key="2">
    <citation type="journal article" date="1996" name="Microbiology">
        <title>The 25 degrees-36 degrees region of the Bacillus subtilis chromosome: determination of the sequence of a 146 kb segment and identification of 113 genes.</title>
        <authorList>
            <person name="Yamane K."/>
            <person name="Kumano M."/>
            <person name="Kurita K."/>
        </authorList>
    </citation>
    <scope>NUCLEOTIDE SEQUENCE [GENOMIC DNA]</scope>
    <source>
        <strain>168</strain>
    </source>
</reference>
<reference key="3">
    <citation type="journal article" date="1997" name="Nature">
        <title>The complete genome sequence of the Gram-positive bacterium Bacillus subtilis.</title>
        <authorList>
            <person name="Kunst F."/>
            <person name="Ogasawara N."/>
            <person name="Moszer I."/>
            <person name="Albertini A.M."/>
            <person name="Alloni G."/>
            <person name="Azevedo V."/>
            <person name="Bertero M.G."/>
            <person name="Bessieres P."/>
            <person name="Bolotin A."/>
            <person name="Borchert S."/>
            <person name="Borriss R."/>
            <person name="Boursier L."/>
            <person name="Brans A."/>
            <person name="Braun M."/>
            <person name="Brignell S.C."/>
            <person name="Bron S."/>
            <person name="Brouillet S."/>
            <person name="Bruschi C.V."/>
            <person name="Caldwell B."/>
            <person name="Capuano V."/>
            <person name="Carter N.M."/>
            <person name="Choi S.-K."/>
            <person name="Codani J.-J."/>
            <person name="Connerton I.F."/>
            <person name="Cummings N.J."/>
            <person name="Daniel R.A."/>
            <person name="Denizot F."/>
            <person name="Devine K.M."/>
            <person name="Duesterhoeft A."/>
            <person name="Ehrlich S.D."/>
            <person name="Emmerson P.T."/>
            <person name="Entian K.-D."/>
            <person name="Errington J."/>
            <person name="Fabret C."/>
            <person name="Ferrari E."/>
            <person name="Foulger D."/>
            <person name="Fritz C."/>
            <person name="Fujita M."/>
            <person name="Fujita Y."/>
            <person name="Fuma S."/>
            <person name="Galizzi A."/>
            <person name="Galleron N."/>
            <person name="Ghim S.-Y."/>
            <person name="Glaser P."/>
            <person name="Goffeau A."/>
            <person name="Golightly E.J."/>
            <person name="Grandi G."/>
            <person name="Guiseppi G."/>
            <person name="Guy B.J."/>
            <person name="Haga K."/>
            <person name="Haiech J."/>
            <person name="Harwood C.R."/>
            <person name="Henaut A."/>
            <person name="Hilbert H."/>
            <person name="Holsappel S."/>
            <person name="Hosono S."/>
            <person name="Hullo M.-F."/>
            <person name="Itaya M."/>
            <person name="Jones L.-M."/>
            <person name="Joris B."/>
            <person name="Karamata D."/>
            <person name="Kasahara Y."/>
            <person name="Klaerr-Blanchard M."/>
            <person name="Klein C."/>
            <person name="Kobayashi Y."/>
            <person name="Koetter P."/>
            <person name="Koningstein G."/>
            <person name="Krogh S."/>
            <person name="Kumano M."/>
            <person name="Kurita K."/>
            <person name="Lapidus A."/>
            <person name="Lardinois S."/>
            <person name="Lauber J."/>
            <person name="Lazarevic V."/>
            <person name="Lee S.-M."/>
            <person name="Levine A."/>
            <person name="Liu H."/>
            <person name="Masuda S."/>
            <person name="Mauel C."/>
            <person name="Medigue C."/>
            <person name="Medina N."/>
            <person name="Mellado R.P."/>
            <person name="Mizuno M."/>
            <person name="Moestl D."/>
            <person name="Nakai S."/>
            <person name="Noback M."/>
            <person name="Noone D."/>
            <person name="O'Reilly M."/>
            <person name="Ogawa K."/>
            <person name="Ogiwara A."/>
            <person name="Oudega B."/>
            <person name="Park S.-H."/>
            <person name="Parro V."/>
            <person name="Pohl T.M."/>
            <person name="Portetelle D."/>
            <person name="Porwollik S."/>
            <person name="Prescott A.M."/>
            <person name="Presecan E."/>
            <person name="Pujic P."/>
            <person name="Purnelle B."/>
            <person name="Rapoport G."/>
            <person name="Rey M."/>
            <person name="Reynolds S."/>
            <person name="Rieger M."/>
            <person name="Rivolta C."/>
            <person name="Rocha E."/>
            <person name="Roche B."/>
            <person name="Rose M."/>
            <person name="Sadaie Y."/>
            <person name="Sato T."/>
            <person name="Scanlan E."/>
            <person name="Schleich S."/>
            <person name="Schroeter R."/>
            <person name="Scoffone F."/>
            <person name="Sekiguchi J."/>
            <person name="Sekowska A."/>
            <person name="Seror S.J."/>
            <person name="Serror P."/>
            <person name="Shin B.-S."/>
            <person name="Soldo B."/>
            <person name="Sorokin A."/>
            <person name="Tacconi E."/>
            <person name="Takagi T."/>
            <person name="Takahashi H."/>
            <person name="Takemaru K."/>
            <person name="Takeuchi M."/>
            <person name="Tamakoshi A."/>
            <person name="Tanaka T."/>
            <person name="Terpstra P."/>
            <person name="Tognoni A."/>
            <person name="Tosato V."/>
            <person name="Uchiyama S."/>
            <person name="Vandenbol M."/>
            <person name="Vannier F."/>
            <person name="Vassarotti A."/>
            <person name="Viari A."/>
            <person name="Wambutt R."/>
            <person name="Wedler E."/>
            <person name="Wedler H."/>
            <person name="Weitzenegger T."/>
            <person name="Winters P."/>
            <person name="Wipat A."/>
            <person name="Yamamoto H."/>
            <person name="Yamane K."/>
            <person name="Yasumoto K."/>
            <person name="Yata K."/>
            <person name="Yoshida K."/>
            <person name="Yoshikawa H.-F."/>
            <person name="Zumstein E."/>
            <person name="Yoshikawa H."/>
            <person name="Danchin A."/>
        </authorList>
    </citation>
    <scope>NUCLEOTIDE SEQUENCE [LARGE SCALE GENOMIC DNA]</scope>
    <source>
        <strain>168</strain>
    </source>
</reference>
<reference key="4">
    <citation type="journal article" date="2004" name="J. Bacteriol.">
        <title>Three different systems participate in L-cystine uptake in Bacillus subtilis.</title>
        <authorList>
            <person name="Burguiere P."/>
            <person name="Auger S."/>
            <person name="Hullo M.-F."/>
            <person name="Danchin A."/>
            <person name="Martin-Verstraete I."/>
        </authorList>
    </citation>
    <scope>FUNCTION IN L-CYSTINE TRANSPORT</scope>
    <scope>BIOPHYSICOCHEMICAL PROPERTIES</scope>
    <source>
        <strain>168</strain>
    </source>
</reference>
<comment type="function">
    <text evidence="4">Part of the ABC transporter complex TcyABC involved in L-cystine import. Probably responsible for the translocation of the substrate across the membrane (Probable).</text>
</comment>
<comment type="biophysicochemical properties">
    <kinetics>
        <Vmax evidence="2">0.35 nmol/min/mg enzyme for L-cystine transport</Vmax>
    </kinetics>
</comment>
<comment type="subunit">
    <text evidence="3">The complex is composed of two ATP-binding proteins (TcyC), two transmembrane proteins (TcyB) and a solute-binding protein (TcyA).</text>
</comment>
<comment type="subcellular location">
    <subcellularLocation>
        <location evidence="3">Cell membrane</location>
        <topology evidence="1">Multi-pass membrane protein</topology>
    </subcellularLocation>
</comment>
<comment type="similarity">
    <text evidence="3">Belongs to the binding-protein-dependent transport system permease family.</text>
</comment>
<gene>
    <name type="primary">tcyB</name>
    <name type="synonym">yckJ</name>
    <name type="ordered locus">BSU03600</name>
</gene>
<proteinExistence type="evidence at protein level"/>
<protein>
    <recommendedName>
        <fullName>L-cystine transport system permease protein TcyB</fullName>
    </recommendedName>
</protein>